<proteinExistence type="evidence at protein level"/>
<name>TPM2_RABIT</name>
<dbReference type="PIR" id="A02980">
    <property type="entry name" value="TMRBB"/>
</dbReference>
<dbReference type="RefSeq" id="NP_001348409.1">
    <property type="nucleotide sequence ID" value="NM_001361480.1"/>
</dbReference>
<dbReference type="RefSeq" id="XP_017194790.1">
    <property type="nucleotide sequence ID" value="XM_017339301.1"/>
</dbReference>
<dbReference type="SMR" id="P58776"/>
<dbReference type="FunCoup" id="P58776">
    <property type="interactions" value="222"/>
</dbReference>
<dbReference type="IntAct" id="P58776">
    <property type="interactions" value="1"/>
</dbReference>
<dbReference type="MINT" id="P58776"/>
<dbReference type="STRING" id="9986.ENSOCUP00000039817"/>
<dbReference type="iPTMnet" id="P58776"/>
<dbReference type="PaxDb" id="9986-ENSOCUP00000022333"/>
<dbReference type="GeneID" id="100125984"/>
<dbReference type="eggNOG" id="KOG1003">
    <property type="taxonomic scope" value="Eukaryota"/>
</dbReference>
<dbReference type="HOGENOM" id="CLU_055027_0_0_1"/>
<dbReference type="InParanoid" id="P58776"/>
<dbReference type="OMA" id="PTHECHT"/>
<dbReference type="Proteomes" id="UP000001811">
    <property type="component" value="Unplaced"/>
</dbReference>
<dbReference type="ExpressionAtlas" id="P58776">
    <property type="expression patterns" value="baseline"/>
</dbReference>
<dbReference type="GO" id="GO:0015629">
    <property type="term" value="C:actin cytoskeleton"/>
    <property type="evidence" value="ECO:0000250"/>
    <property type="project" value="UniProtKB"/>
</dbReference>
<dbReference type="GO" id="GO:0005737">
    <property type="term" value="C:cytoplasm"/>
    <property type="evidence" value="ECO:0007669"/>
    <property type="project" value="UniProtKB-KW"/>
</dbReference>
<dbReference type="GO" id="GO:0051015">
    <property type="term" value="F:actin filament binding"/>
    <property type="evidence" value="ECO:0000250"/>
    <property type="project" value="UniProtKB"/>
</dbReference>
<dbReference type="GO" id="GO:0042802">
    <property type="term" value="F:identical protein binding"/>
    <property type="evidence" value="ECO:0000250"/>
    <property type="project" value="UniProtKB"/>
</dbReference>
<dbReference type="GO" id="GO:0046982">
    <property type="term" value="F:protein heterodimerization activity"/>
    <property type="evidence" value="ECO:0000250"/>
    <property type="project" value="UniProtKB"/>
</dbReference>
<dbReference type="GO" id="GO:0042803">
    <property type="term" value="F:protein homodimerization activity"/>
    <property type="evidence" value="ECO:0000250"/>
    <property type="project" value="UniProtKB"/>
</dbReference>
<dbReference type="FunFam" id="1.20.5.1160:FF:000013">
    <property type="entry name" value="Tropomyosin 1 (alpha)"/>
    <property type="match status" value="1"/>
</dbReference>
<dbReference type="FunFam" id="1.20.5.170:FF:000005">
    <property type="entry name" value="Tropomyosin alpha-1 chain"/>
    <property type="match status" value="1"/>
</dbReference>
<dbReference type="FunFam" id="1.20.5.170:FF:000001">
    <property type="entry name" value="Tropomyosin alpha-1 chain isoform 1"/>
    <property type="match status" value="1"/>
</dbReference>
<dbReference type="FunFam" id="1.20.5.340:FF:000001">
    <property type="entry name" value="Tropomyosin alpha-1 chain isoform 2"/>
    <property type="match status" value="1"/>
</dbReference>
<dbReference type="Gene3D" id="1.20.5.170">
    <property type="match status" value="2"/>
</dbReference>
<dbReference type="Gene3D" id="1.20.5.340">
    <property type="match status" value="1"/>
</dbReference>
<dbReference type="InterPro" id="IPR000533">
    <property type="entry name" value="Tropomyosin"/>
</dbReference>
<dbReference type="PANTHER" id="PTHR19269">
    <property type="entry name" value="TROPOMYOSIN"/>
    <property type="match status" value="1"/>
</dbReference>
<dbReference type="Pfam" id="PF00261">
    <property type="entry name" value="Tropomyosin"/>
    <property type="match status" value="1"/>
</dbReference>
<dbReference type="PRINTS" id="PR00194">
    <property type="entry name" value="TROPOMYOSIN"/>
</dbReference>
<dbReference type="SUPFAM" id="SSF57997">
    <property type="entry name" value="Tropomyosin"/>
    <property type="match status" value="1"/>
</dbReference>
<dbReference type="PROSITE" id="PS00326">
    <property type="entry name" value="TROPOMYOSIN"/>
    <property type="match status" value="1"/>
</dbReference>
<protein>
    <recommendedName>
        <fullName>Tropomyosin beta chain</fullName>
    </recommendedName>
    <alternativeName>
        <fullName>Beta-tropomyosin</fullName>
    </alternativeName>
    <alternativeName>
        <fullName>Tropomyosin-2</fullName>
    </alternativeName>
</protein>
<feature type="chain" id="PRO_0000205630" description="Tropomyosin beta chain">
    <location>
        <begin position="1"/>
        <end position="284"/>
    </location>
</feature>
<feature type="region of interest" description="Disordered" evidence="6">
    <location>
        <begin position="1"/>
        <end position="78"/>
    </location>
</feature>
<feature type="region of interest" description="Disordered" evidence="6">
    <location>
        <begin position="117"/>
        <end position="136"/>
    </location>
</feature>
<feature type="coiled-coil region" evidence="1">
    <location>
        <begin position="1"/>
        <end position="284"/>
    </location>
</feature>
<feature type="compositionally biased region" description="Basic and acidic residues" evidence="6">
    <location>
        <begin position="12"/>
        <end position="40"/>
    </location>
</feature>
<feature type="compositionally biased region" description="Basic and acidic residues" evidence="6">
    <location>
        <begin position="51"/>
        <end position="78"/>
    </location>
</feature>
<feature type="modified residue" description="N-acetylmethionine" evidence="7">
    <location>
        <position position="1"/>
    </location>
</feature>
<feature type="modified residue" description="Phosphothreonine" evidence="3">
    <location>
        <position position="53"/>
    </location>
</feature>
<feature type="modified residue" description="Phosphoserine; by PIK3CG" evidence="4">
    <location>
        <position position="61"/>
    </location>
</feature>
<feature type="modified residue" description="Phosphothreonine" evidence="3">
    <location>
        <position position="79"/>
    </location>
</feature>
<feature type="modified residue" description="Phosphoserine" evidence="2">
    <location>
        <position position="87"/>
    </location>
</feature>
<feature type="modified residue" description="Phosphothreonine" evidence="3">
    <location>
        <position position="108"/>
    </location>
</feature>
<feature type="modified residue" description="Phosphoserine" evidence="3">
    <location>
        <position position="158"/>
    </location>
</feature>
<feature type="modified residue" description="Phosphoserine" evidence="3">
    <location>
        <position position="206"/>
    </location>
</feature>
<feature type="modified residue" description="Phosphoserine" evidence="5">
    <location>
        <position position="215"/>
    </location>
</feature>
<feature type="modified residue" description="Phosphothreonine" evidence="3">
    <location>
        <position position="252"/>
    </location>
</feature>
<feature type="modified residue" description="Phosphotyrosine" evidence="5">
    <location>
        <position position="261"/>
    </location>
</feature>
<feature type="modified residue" description="Phosphoserine" evidence="5">
    <location>
        <position position="271"/>
    </location>
</feature>
<feature type="modified residue" description="Phosphothreonine" evidence="3">
    <location>
        <position position="282"/>
    </location>
</feature>
<feature type="modified residue" description="Phosphoserine" evidence="3">
    <location>
        <position position="283"/>
    </location>
</feature>
<accession>P58776</accession>
<accession>P02560</accession>
<keyword id="KW-0007">Acetylation</keyword>
<keyword id="KW-0009">Actin-binding</keyword>
<keyword id="KW-0175">Coiled coil</keyword>
<keyword id="KW-0963">Cytoplasm</keyword>
<keyword id="KW-0206">Cytoskeleton</keyword>
<keyword id="KW-0903">Direct protein sequencing</keyword>
<keyword id="KW-0514">Muscle protein</keyword>
<keyword id="KW-0597">Phosphoprotein</keyword>
<keyword id="KW-1185">Reference proteome</keyword>
<gene>
    <name type="primary">TPM2</name>
</gene>
<organism>
    <name type="scientific">Oryctolagus cuniculus</name>
    <name type="common">Rabbit</name>
    <dbReference type="NCBI Taxonomy" id="9986"/>
    <lineage>
        <taxon>Eukaryota</taxon>
        <taxon>Metazoa</taxon>
        <taxon>Chordata</taxon>
        <taxon>Craniata</taxon>
        <taxon>Vertebrata</taxon>
        <taxon>Euteleostomi</taxon>
        <taxon>Mammalia</taxon>
        <taxon>Eutheria</taxon>
        <taxon>Euarchontoglires</taxon>
        <taxon>Glires</taxon>
        <taxon>Lagomorpha</taxon>
        <taxon>Leporidae</taxon>
        <taxon>Oryctolagus</taxon>
    </lineage>
</organism>
<reference key="1">
    <citation type="journal article" date="1980" name="J. Biol. Chem.">
        <title>A comparison of the amino acid sequences of rabbit skeletal muscle alpha- and beta-tropomyosins.</title>
        <authorList>
            <person name="Mak A.S."/>
            <person name="Smillie L.B."/>
            <person name="Steward G.R."/>
        </authorList>
    </citation>
    <scope>PROTEIN SEQUENCE</scope>
    <scope>ACETYLATION AT MET-1</scope>
</reference>
<sequence length="284" mass="32837">MDAIKKKMQMLKLDKENAIDRAEQAEADKKQAEDRCKQLEEEQQALQKKLKGTEDEVEKYSESVKDAQEKLEQAEKKATDAEADVASLNRRIQLVEEELDRAQERLATALQKLEEAEKAADESERGMKVIENRAMKDEEKMELQEMQLKEAKHIAEDSDRKYEEVARKLVILEGELERSEERAEVAESKCGDLEEELKIVTNNLKSLEAQADKYSTKEDKYEEEIKLLEEKLKEAETRAEFAERSVAKLEKTIDDLEDEVYAQKMKYKAISEELDNALNDITSL</sequence>
<comment type="function">
    <text evidence="4 5">Binds to actin filaments in muscle and non-muscle cells. Plays a central role, in association with the troponin complex, in the calcium dependent regulation of vertebrate striated muscle contraction. Smooth muscle contraction is regulated by interaction with caldesmon. In non-muscle cells is implicated in stabilizing cytoskeleton actin filaments. The non-muscle isoform may have a role in agonist-mediated receptor internalization.</text>
</comment>
<comment type="subunit">
    <text evidence="5">Homodimer. Heterodimer of an alpha (TPM1, TPM3 or TPM4) and a beta (TPM2) chain.</text>
</comment>
<comment type="subcellular location">
    <subcellularLocation>
        <location evidence="5">Cytoplasm</location>
        <location evidence="5">Cytoskeleton</location>
    </subcellularLocation>
    <text evidence="5">Associates with F-actin stress fibers.</text>
</comment>
<comment type="domain">
    <text>The molecule is in a coiled coil structure that is formed by 2 polypeptide chains. The sequence exhibits a prominent seven-residues periodicity.</text>
</comment>
<comment type="PTM">
    <text evidence="1">Phosphorylated on Ser-61 by PIK3CG. Phosphorylation on Ser-61 is required for ADRB2 internalization (By similarity).</text>
</comment>
<comment type="similarity">
    <text evidence="8">Belongs to the tropomyosin family.</text>
</comment>
<evidence type="ECO:0000250" key="1"/>
<evidence type="ECO:0000250" key="2">
    <source>
        <dbReference type="UniProtKB" id="P06753"/>
    </source>
</evidence>
<evidence type="ECO:0000250" key="3">
    <source>
        <dbReference type="UniProtKB" id="P07951"/>
    </source>
</evidence>
<evidence type="ECO:0000250" key="4">
    <source>
        <dbReference type="UniProtKB" id="P58774"/>
    </source>
</evidence>
<evidence type="ECO:0000250" key="5">
    <source>
        <dbReference type="UniProtKB" id="P58775"/>
    </source>
</evidence>
<evidence type="ECO:0000256" key="6">
    <source>
        <dbReference type="SAM" id="MobiDB-lite"/>
    </source>
</evidence>
<evidence type="ECO:0000269" key="7">
    <source>
    </source>
</evidence>
<evidence type="ECO:0000305" key="8"/>